<dbReference type="EMBL" id="CP001398">
    <property type="protein sequence ID" value="ACS34541.1"/>
    <property type="molecule type" value="Genomic_DNA"/>
</dbReference>
<dbReference type="RefSeq" id="WP_015859644.1">
    <property type="nucleotide sequence ID" value="NC_012804.1"/>
</dbReference>
<dbReference type="SMR" id="C5A2C2"/>
<dbReference type="STRING" id="593117.TGAM_2039"/>
<dbReference type="PaxDb" id="593117-TGAM_2039"/>
<dbReference type="GeneID" id="7988605"/>
<dbReference type="KEGG" id="tga:TGAM_2039"/>
<dbReference type="PATRIC" id="fig|593117.10.peg.2050"/>
<dbReference type="eggNOG" id="arCOG00971">
    <property type="taxonomic scope" value="Archaea"/>
</dbReference>
<dbReference type="HOGENOM" id="CLU_035750_4_1_2"/>
<dbReference type="OrthoDB" id="9421at2157"/>
<dbReference type="Proteomes" id="UP000001488">
    <property type="component" value="Chromosome"/>
</dbReference>
<dbReference type="GO" id="GO:0005737">
    <property type="term" value="C:cytoplasm"/>
    <property type="evidence" value="ECO:0007669"/>
    <property type="project" value="UniProtKB-SubCell"/>
</dbReference>
<dbReference type="GO" id="GO:0019773">
    <property type="term" value="C:proteasome core complex, alpha-subunit complex"/>
    <property type="evidence" value="ECO:0000250"/>
    <property type="project" value="UniProtKB"/>
</dbReference>
<dbReference type="GO" id="GO:0004298">
    <property type="term" value="F:threonine-type endopeptidase activity"/>
    <property type="evidence" value="ECO:0007669"/>
    <property type="project" value="InterPro"/>
</dbReference>
<dbReference type="GO" id="GO:0010498">
    <property type="term" value="P:proteasomal protein catabolic process"/>
    <property type="evidence" value="ECO:0007669"/>
    <property type="project" value="UniProtKB-UniRule"/>
</dbReference>
<dbReference type="GO" id="GO:0006511">
    <property type="term" value="P:ubiquitin-dependent protein catabolic process"/>
    <property type="evidence" value="ECO:0007669"/>
    <property type="project" value="InterPro"/>
</dbReference>
<dbReference type="CDD" id="cd03756">
    <property type="entry name" value="proteasome_alpha_archeal"/>
    <property type="match status" value="1"/>
</dbReference>
<dbReference type="FunFam" id="3.60.20.10:FF:000004">
    <property type="entry name" value="Proteasome subunit alpha type-4"/>
    <property type="match status" value="1"/>
</dbReference>
<dbReference type="Gene3D" id="3.60.20.10">
    <property type="entry name" value="Glutamine Phosphoribosylpyrophosphate, subunit 1, domain 1"/>
    <property type="match status" value="1"/>
</dbReference>
<dbReference type="HAMAP" id="MF_00289_A">
    <property type="entry name" value="Proteasome_A_A"/>
    <property type="match status" value="1"/>
</dbReference>
<dbReference type="InterPro" id="IPR029055">
    <property type="entry name" value="Ntn_hydrolases_N"/>
</dbReference>
<dbReference type="InterPro" id="IPR050115">
    <property type="entry name" value="Proteasome_alpha"/>
</dbReference>
<dbReference type="InterPro" id="IPR023332">
    <property type="entry name" value="Proteasome_alpha-type"/>
</dbReference>
<dbReference type="InterPro" id="IPR019982">
    <property type="entry name" value="Proteasome_asu_arc"/>
</dbReference>
<dbReference type="InterPro" id="IPR000426">
    <property type="entry name" value="Proteasome_asu_N"/>
</dbReference>
<dbReference type="InterPro" id="IPR001353">
    <property type="entry name" value="Proteasome_sua/b"/>
</dbReference>
<dbReference type="NCBIfam" id="TIGR03633">
    <property type="entry name" value="arc_protsome_A"/>
    <property type="match status" value="1"/>
</dbReference>
<dbReference type="NCBIfam" id="NF003075">
    <property type="entry name" value="PRK03996.1"/>
    <property type="match status" value="1"/>
</dbReference>
<dbReference type="PANTHER" id="PTHR11599">
    <property type="entry name" value="PROTEASOME SUBUNIT ALPHA/BETA"/>
    <property type="match status" value="1"/>
</dbReference>
<dbReference type="Pfam" id="PF00227">
    <property type="entry name" value="Proteasome"/>
    <property type="match status" value="1"/>
</dbReference>
<dbReference type="Pfam" id="PF10584">
    <property type="entry name" value="Proteasome_A_N"/>
    <property type="match status" value="1"/>
</dbReference>
<dbReference type="SMART" id="SM00948">
    <property type="entry name" value="Proteasome_A_N"/>
    <property type="match status" value="1"/>
</dbReference>
<dbReference type="SUPFAM" id="SSF56235">
    <property type="entry name" value="N-terminal nucleophile aminohydrolases (Ntn hydrolases)"/>
    <property type="match status" value="1"/>
</dbReference>
<dbReference type="PROSITE" id="PS00388">
    <property type="entry name" value="PROTEASOME_ALPHA_1"/>
    <property type="match status" value="1"/>
</dbReference>
<dbReference type="PROSITE" id="PS51475">
    <property type="entry name" value="PROTEASOME_ALPHA_2"/>
    <property type="match status" value="1"/>
</dbReference>
<keyword id="KW-0963">Cytoplasm</keyword>
<keyword id="KW-0647">Proteasome</keyword>
<keyword id="KW-1185">Reference proteome</keyword>
<protein>
    <recommendedName>
        <fullName evidence="1">Proteasome subunit alpha</fullName>
    </recommendedName>
    <alternativeName>
        <fullName evidence="1">20S proteasome alpha subunit</fullName>
    </alternativeName>
    <alternativeName>
        <fullName evidence="1">Proteasome core protein PsmA</fullName>
    </alternativeName>
</protein>
<evidence type="ECO:0000255" key="1">
    <source>
        <dbReference type="HAMAP-Rule" id="MF_00289"/>
    </source>
</evidence>
<proteinExistence type="inferred from homology"/>
<reference key="1">
    <citation type="journal article" date="2007" name="Genome Biol.">
        <title>Genome analysis and genome-wide proteomics of Thermococcus gammatolerans, the most radioresistant organism known amongst the Archaea.</title>
        <authorList>
            <person name="Zivanovic Y."/>
            <person name="Armengaud J."/>
            <person name="Lagorce A."/>
            <person name="Leplat C."/>
            <person name="Guerin P."/>
            <person name="Dutertre M."/>
            <person name="Anthouard V."/>
            <person name="Forterre P."/>
            <person name="Wincker P."/>
            <person name="Confalonieri F."/>
        </authorList>
    </citation>
    <scope>NUCLEOTIDE SEQUENCE [LARGE SCALE GENOMIC DNA]</scope>
    <source>
        <strain>DSM 15229 / JCM 11827 / EJ3</strain>
    </source>
</reference>
<sequence>MAFVPPQAGYDRAITVFSPDGRLFQVNYAREAVKRGATAVGVKWKGGVVLAVEKRITSRLIEPSSYEKIFQIDDHIAAAPSGIIADARVLVDRARLEAQIYRLTYGEPVPLTVLVKKICDLKQAHTQYGGVRPFGAALLMAGVNEKPELYETDPSGAYFEWKAVAIGSGRNTAMAIFEEHYSDDIDMEGAIKLAILALAKTLEEPSPESIEVAYITLDEKRWKKLDKEEVAKYLNEILEEIKEEEVEEREEDYSELDQNY</sequence>
<accession>C5A2C2</accession>
<gene>
    <name evidence="1" type="primary">psmA</name>
    <name type="ordered locus">TGAM_2039</name>
</gene>
<organism>
    <name type="scientific">Thermococcus gammatolerans (strain DSM 15229 / JCM 11827 / EJ3)</name>
    <dbReference type="NCBI Taxonomy" id="593117"/>
    <lineage>
        <taxon>Archaea</taxon>
        <taxon>Methanobacteriati</taxon>
        <taxon>Methanobacteriota</taxon>
        <taxon>Thermococci</taxon>
        <taxon>Thermococcales</taxon>
        <taxon>Thermococcaceae</taxon>
        <taxon>Thermococcus</taxon>
    </lineage>
</organism>
<comment type="function">
    <text evidence="1">Component of the proteasome core, a large protease complex with broad specificity involved in protein degradation.</text>
</comment>
<comment type="activity regulation">
    <text evidence="1">The formation of the proteasomal ATPase PAN-20S proteasome complex, via the docking of the C-termini of PAN into the intersubunit pockets in the alpha-rings, triggers opening of the gate for substrate entry. Interconversion between the open-gate and close-gate conformations leads to a dynamic regulation of the 20S proteasome proteolysis activity.</text>
</comment>
<comment type="subunit">
    <text evidence="1">The 20S proteasome core is composed of 14 alpha and 14 beta subunits that assemble into four stacked heptameric rings, resulting in a barrel-shaped structure. The two inner rings, each composed of seven catalytic beta subunits, are sandwiched by two outer rings, each composed of seven alpha subunits. The catalytic chamber with the active sites is on the inside of the barrel. Has a gated structure, the ends of the cylinder being occluded by the N-termini of the alpha-subunits. Is capped at one or both ends by the proteasome regulatory ATPase, PAN.</text>
</comment>
<comment type="subcellular location">
    <subcellularLocation>
        <location evidence="1">Cytoplasm</location>
    </subcellularLocation>
</comment>
<comment type="similarity">
    <text evidence="1">Belongs to the peptidase T1A family.</text>
</comment>
<name>PSA_THEGJ</name>
<feature type="chain" id="PRO_1000204865" description="Proteasome subunit alpha">
    <location>
        <begin position="1"/>
        <end position="260"/>
    </location>
</feature>